<sequence length="733" mass="81815">MAQFTGRVVGDYLVGRQIGSGSFSVVWEARHRVDGTEVAIKEIAMDRLNKKLQESLMSEIFILRRINHPNIIRLIDMIKSPGKVHLVLEYCKGGDLSVYVQRHGIVPEATAKHFMQQLAAGLQVLRDNNIIHRDLKPQNLLLSTNENDADLKIADFGFARSLQPRGLAETLCGSPLYMAPEIMQLQKYDAKADLWSVGAILFQLVTGRTPFTGNSQIQLLQNIIRSTELHFPGDCRDLSLDCIDLCQKLLRRNPVERLTFEEFFNHPFLSDRQSYDFSRSRLGLRTMDGFLSSGSSPSRNMEESSQEDCLPFLLDDDSSGPEGSPSYLKKTSSMKSSSGIKVDTRIERKEVESSPLKHTELTSGYSSFNQKVENDRFRFETQINSDRRNRREPTGLTDSRSLIAPGRVDDSQDSMDQDFVLVSGPPVDMPSSSSSSSKPYNFPFKSQSPPVELFNRSISSTAPMPIIGATSNSIGQFGSLDSQYSAPSTSHGSLDLGDAFEQPSTHSLTRIRSLRKYAATIAELVYERIESDKHLEAFSIQLAILAIWKQALHICHTQAISGLEGSPSQDINKLRSSSLKHDTHSSNKVTDLSHDGSEEISSQIQRQFIQEIELAEELAKSIEPGNTKMPDAMETIFEAALDLGKLGGVKEVMGDTENAGNQYSKAVRLLVFLLVEAPMLILNPPLSLTNSVRYRLRTYIDFLSRRLKHLQSHRRSSAGQMQGSSLAMMNRQS</sequence>
<feature type="chain" id="PRO_0000434621" description="Serine/threonine-protein kinase ATG1c">
    <location>
        <begin position="1"/>
        <end position="733"/>
    </location>
</feature>
<feature type="domain" description="Protein kinase" evidence="2">
    <location>
        <begin position="12"/>
        <end position="269"/>
    </location>
</feature>
<feature type="region of interest" description="Disordered" evidence="3">
    <location>
        <begin position="292"/>
        <end position="363"/>
    </location>
</feature>
<feature type="region of interest" description="Disordered" evidence="3">
    <location>
        <begin position="379"/>
        <end position="414"/>
    </location>
</feature>
<feature type="region of interest" description="Disordered" evidence="3">
    <location>
        <begin position="565"/>
        <end position="596"/>
    </location>
</feature>
<feature type="region of interest" description="Disordered" evidence="3">
    <location>
        <begin position="713"/>
        <end position="733"/>
    </location>
</feature>
<feature type="short sequence motif" description="AIM (Atg8-family-interacting motif)" evidence="1">
    <location>
        <begin position="419"/>
        <end position="422"/>
    </location>
</feature>
<feature type="compositionally biased region" description="Polar residues" evidence="3">
    <location>
        <begin position="329"/>
        <end position="339"/>
    </location>
</feature>
<feature type="compositionally biased region" description="Basic and acidic residues" evidence="3">
    <location>
        <begin position="342"/>
        <end position="360"/>
    </location>
</feature>
<feature type="compositionally biased region" description="Basic and acidic residues" evidence="3">
    <location>
        <begin position="379"/>
        <end position="393"/>
    </location>
</feature>
<feature type="compositionally biased region" description="Polar residues" evidence="3">
    <location>
        <begin position="566"/>
        <end position="577"/>
    </location>
</feature>
<feature type="compositionally biased region" description="Basic and acidic residues" evidence="3">
    <location>
        <begin position="579"/>
        <end position="596"/>
    </location>
</feature>
<feature type="compositionally biased region" description="Polar residues" evidence="3">
    <location>
        <begin position="717"/>
        <end position="733"/>
    </location>
</feature>
<feature type="active site" description="Proton acceptor" evidence="2">
    <location>
        <position position="134"/>
    </location>
</feature>
<feature type="binding site" evidence="2">
    <location>
        <begin position="18"/>
        <end position="26"/>
    </location>
    <ligand>
        <name>ATP</name>
        <dbReference type="ChEBI" id="CHEBI:30616"/>
    </ligand>
</feature>
<feature type="binding site" evidence="2">
    <location>
        <position position="41"/>
    </location>
    <ligand>
        <name>ATP</name>
        <dbReference type="ChEBI" id="CHEBI:30616"/>
    </ligand>
</feature>
<feature type="splice variant" id="VSP_057967" description="In isoform 2.">
    <original>MAQFTGRVVGDYLVGRQIGSGSFSVVWEARHRVDGTEVAIKEIAMDRLNKKLQESLMSEIFILRRINHPNIIRLIDMIKSPGKVHLVLEYCKGGDLSVYVQRHGIVPEATAKHFMQQLAAGLQVLRDNNIIHRDLKPQNLLLSTNENDADLKIADFGFA</original>
    <variation>MNELEKVSNGLKLLLNVYCRIS</variation>
    <location>
        <begin position="1"/>
        <end position="159"/>
    </location>
</feature>
<feature type="sequence conflict" description="In Ref. 3; AAM14087." evidence="6" ref="3">
    <original>T</original>
    <variation>I</variation>
    <location>
        <position position="227"/>
    </location>
</feature>
<feature type="sequence conflict" description="In Ref. 3; AAM14087." evidence="6" ref="3">
    <original>S</original>
    <variation>N</variation>
    <location>
        <position position="578"/>
    </location>
</feature>
<name>ATG1C_ARATH</name>
<evidence type="ECO:0000250" key="1">
    <source>
        <dbReference type="UniProtKB" id="Q94C95"/>
    </source>
</evidence>
<evidence type="ECO:0000255" key="2">
    <source>
        <dbReference type="PROSITE-ProRule" id="PRU00159"/>
    </source>
</evidence>
<evidence type="ECO:0000256" key="3">
    <source>
        <dbReference type="SAM" id="MobiDB-lite"/>
    </source>
</evidence>
<evidence type="ECO:0000303" key="4">
    <source>
    </source>
</evidence>
<evidence type="ECO:0000303" key="5">
    <source>
    </source>
</evidence>
<evidence type="ECO:0000305" key="6"/>
<evidence type="ECO:0000312" key="7">
    <source>
        <dbReference type="Araport" id="AT2G37840"/>
    </source>
</evidence>
<keyword id="KW-0025">Alternative splicing</keyword>
<keyword id="KW-0067">ATP-binding</keyword>
<keyword id="KW-0072">Autophagy</keyword>
<keyword id="KW-0968">Cytoplasmic vesicle</keyword>
<keyword id="KW-0418">Kinase</keyword>
<keyword id="KW-0547">Nucleotide-binding</keyword>
<keyword id="KW-0653">Protein transport</keyword>
<keyword id="KW-1185">Reference proteome</keyword>
<keyword id="KW-0723">Serine/threonine-protein kinase</keyword>
<keyword id="KW-0808">Transferase</keyword>
<keyword id="KW-0813">Transport</keyword>
<accession>F4IRW0</accession>
<accession>Q5E914</accession>
<accession>Q8RWS7</accession>
<proteinExistence type="evidence at transcript level"/>
<comment type="function">
    <text evidence="1">Serine/threonine protein kinase involved in autophagy. The ATG1-ATG13 protein kinase complex regulates downstream events required for autophagosome enclosure and/or vacuolar delivery.</text>
</comment>
<comment type="subcellular location">
    <subcellularLocation>
        <location evidence="1">Cytoplasmic vesicle</location>
        <location evidence="1">Autophagosome</location>
    </subcellularLocation>
</comment>
<comment type="alternative products">
    <event type="alternative splicing"/>
    <isoform>
        <id>F4IRW0-1</id>
        <name>1</name>
        <sequence type="displayed"/>
    </isoform>
    <isoform>
        <id>F4IRW0-2</id>
        <name>2</name>
        <sequence type="described" ref="VSP_057967"/>
    </isoform>
</comment>
<comment type="similarity">
    <text evidence="2">Belongs to the protein kinase superfamily. Ser/Thr protein kinase family.</text>
</comment>
<organism>
    <name type="scientific">Arabidopsis thaliana</name>
    <name type="common">Mouse-ear cress</name>
    <dbReference type="NCBI Taxonomy" id="3702"/>
    <lineage>
        <taxon>Eukaryota</taxon>
        <taxon>Viridiplantae</taxon>
        <taxon>Streptophyta</taxon>
        <taxon>Embryophyta</taxon>
        <taxon>Tracheophyta</taxon>
        <taxon>Spermatophyta</taxon>
        <taxon>Magnoliopsida</taxon>
        <taxon>eudicotyledons</taxon>
        <taxon>Gunneridae</taxon>
        <taxon>Pentapetalae</taxon>
        <taxon>rosids</taxon>
        <taxon>malvids</taxon>
        <taxon>Brassicales</taxon>
        <taxon>Brassicaceae</taxon>
        <taxon>Camelineae</taxon>
        <taxon>Arabidopsis</taxon>
    </lineage>
</organism>
<protein>
    <recommendedName>
        <fullName evidence="6">Serine/threonine-protein kinase ATG1c</fullName>
        <ecNumber>2.7.11.-</ecNumber>
    </recommendedName>
    <alternativeName>
        <fullName evidence="4">Autophagy-related protein 1c</fullName>
        <shortName evidence="4">AtAPG1c</shortName>
    </alternativeName>
</protein>
<reference key="1">
    <citation type="journal article" date="1999" name="Nature">
        <title>Sequence and analysis of chromosome 2 of the plant Arabidopsis thaliana.</title>
        <authorList>
            <person name="Lin X."/>
            <person name="Kaul S."/>
            <person name="Rounsley S.D."/>
            <person name="Shea T.P."/>
            <person name="Benito M.-I."/>
            <person name="Town C.D."/>
            <person name="Fujii C.Y."/>
            <person name="Mason T.M."/>
            <person name="Bowman C.L."/>
            <person name="Barnstead M.E."/>
            <person name="Feldblyum T.V."/>
            <person name="Buell C.R."/>
            <person name="Ketchum K.A."/>
            <person name="Lee J.J."/>
            <person name="Ronning C.M."/>
            <person name="Koo H.L."/>
            <person name="Moffat K.S."/>
            <person name="Cronin L.A."/>
            <person name="Shen M."/>
            <person name="Pai G."/>
            <person name="Van Aken S."/>
            <person name="Umayam L."/>
            <person name="Tallon L.J."/>
            <person name="Gill J.E."/>
            <person name="Adams M.D."/>
            <person name="Carrera A.J."/>
            <person name="Creasy T.H."/>
            <person name="Goodman H.M."/>
            <person name="Somerville C.R."/>
            <person name="Copenhaver G.P."/>
            <person name="Preuss D."/>
            <person name="Nierman W.C."/>
            <person name="White O."/>
            <person name="Eisen J.A."/>
            <person name="Salzberg S.L."/>
            <person name="Fraser C.M."/>
            <person name="Venter J.C."/>
        </authorList>
    </citation>
    <scope>NUCLEOTIDE SEQUENCE [LARGE SCALE GENOMIC DNA]</scope>
    <source>
        <strain>cv. Columbia</strain>
    </source>
</reference>
<reference key="2">
    <citation type="journal article" date="2017" name="Plant J.">
        <title>Araport11: a complete reannotation of the Arabidopsis thaliana reference genome.</title>
        <authorList>
            <person name="Cheng C.Y."/>
            <person name="Krishnakumar V."/>
            <person name="Chan A.P."/>
            <person name="Thibaud-Nissen F."/>
            <person name="Schobel S."/>
            <person name="Town C.D."/>
        </authorList>
    </citation>
    <scope>GENOME REANNOTATION</scope>
    <source>
        <strain>cv. Columbia</strain>
    </source>
</reference>
<reference key="3">
    <citation type="journal article" date="2003" name="Science">
        <title>Empirical analysis of transcriptional activity in the Arabidopsis genome.</title>
        <authorList>
            <person name="Yamada K."/>
            <person name="Lim J."/>
            <person name="Dale J.M."/>
            <person name="Chen H."/>
            <person name="Shinn P."/>
            <person name="Palm C.J."/>
            <person name="Southwick A.M."/>
            <person name="Wu H.C."/>
            <person name="Kim C.J."/>
            <person name="Nguyen M."/>
            <person name="Pham P.K."/>
            <person name="Cheuk R.F."/>
            <person name="Karlin-Newmann G."/>
            <person name="Liu S.X."/>
            <person name="Lam B."/>
            <person name="Sakano H."/>
            <person name="Wu T."/>
            <person name="Yu G."/>
            <person name="Miranda M."/>
            <person name="Quach H.L."/>
            <person name="Tripp M."/>
            <person name="Chang C.H."/>
            <person name="Lee J.M."/>
            <person name="Toriumi M.J."/>
            <person name="Chan M.M."/>
            <person name="Tang C.C."/>
            <person name="Onodera C.S."/>
            <person name="Deng J.M."/>
            <person name="Akiyama K."/>
            <person name="Ansari Y."/>
            <person name="Arakawa T."/>
            <person name="Banh J."/>
            <person name="Banno F."/>
            <person name="Bowser L."/>
            <person name="Brooks S.Y."/>
            <person name="Carninci P."/>
            <person name="Chao Q."/>
            <person name="Choy N."/>
            <person name="Enju A."/>
            <person name="Goldsmith A.D."/>
            <person name="Gurjal M."/>
            <person name="Hansen N.F."/>
            <person name="Hayashizaki Y."/>
            <person name="Johnson-Hopson C."/>
            <person name="Hsuan V.W."/>
            <person name="Iida K."/>
            <person name="Karnes M."/>
            <person name="Khan S."/>
            <person name="Koesema E."/>
            <person name="Ishida J."/>
            <person name="Jiang P.X."/>
            <person name="Jones T."/>
            <person name="Kawai J."/>
            <person name="Kamiya A."/>
            <person name="Meyers C."/>
            <person name="Nakajima M."/>
            <person name="Narusaka M."/>
            <person name="Seki M."/>
            <person name="Sakurai T."/>
            <person name="Satou M."/>
            <person name="Tamse R."/>
            <person name="Vaysberg M."/>
            <person name="Wallender E.K."/>
            <person name="Wong C."/>
            <person name="Yamamura Y."/>
            <person name="Yuan S."/>
            <person name="Shinozaki K."/>
            <person name="Davis R.W."/>
            <person name="Theologis A."/>
            <person name="Ecker J.R."/>
        </authorList>
    </citation>
    <scope>NUCLEOTIDE SEQUENCE [LARGE SCALE MRNA] (ISOFORM 1)</scope>
    <source>
        <strain>cv. Columbia</strain>
    </source>
</reference>
<reference key="4">
    <citation type="submission" date="2005-02" db="EMBL/GenBank/DDBJ databases">
        <title>Arabidopsis ORF clones.</title>
        <authorList>
            <person name="Cheuk R.F."/>
            <person name="Chen H."/>
            <person name="Kim C.J."/>
            <person name="Shinn P."/>
            <person name="Ecker J.R."/>
        </authorList>
    </citation>
    <scope>NUCLEOTIDE SEQUENCE [LARGE SCALE MRNA] (ISOFORM 2)</scope>
    <source>
        <strain>cv. Columbia</strain>
    </source>
</reference>
<reference key="5">
    <citation type="journal article" date="2002" name="Plant Physiol.">
        <title>Leaf senescence and starvation-induced chlorosis are accelerated by the disruption of an Arabidopsis autophagy gene.</title>
        <authorList>
            <person name="Hanaoka H."/>
            <person name="Noda T."/>
            <person name="Shirano Y."/>
            <person name="Kato T."/>
            <person name="Hayashi H."/>
            <person name="Shibata D."/>
            <person name="Tabata S."/>
            <person name="Ohsumi Y."/>
        </authorList>
    </citation>
    <scope>GENE FAMILY</scope>
    <scope>NOMENCLATURE</scope>
</reference>
<reference key="6">
    <citation type="journal article" date="2007" name="Autophagy">
        <title>ATG genes involved in non-selective autophagy are conserved from yeast to man, but the selective Cvt and pexophagy pathways also require organism-specific genes.</title>
        <authorList>
            <person name="Meijer W.H."/>
            <person name="van der Klei I.J."/>
            <person name="Veenhuis M."/>
            <person name="Kiel J.A.K.W."/>
        </authorList>
    </citation>
    <scope>GENE FAMILY</scope>
    <scope>NOMENCLATURE</scope>
</reference>
<dbReference type="EC" id="2.7.11.-"/>
<dbReference type="EMBL" id="CP002685">
    <property type="protein sequence ID" value="AEC09455.1"/>
    <property type="molecule type" value="Genomic_DNA"/>
</dbReference>
<dbReference type="EMBL" id="CP002685">
    <property type="protein sequence ID" value="AEC09456.1"/>
    <property type="molecule type" value="Genomic_DNA"/>
</dbReference>
<dbReference type="EMBL" id="AY091138">
    <property type="protein sequence ID" value="AAM14087.1"/>
    <property type="molecule type" value="mRNA"/>
</dbReference>
<dbReference type="EMBL" id="BT021106">
    <property type="protein sequence ID" value="AAX12876.1"/>
    <property type="molecule type" value="mRNA"/>
</dbReference>
<dbReference type="RefSeq" id="NP_850285.1">
    <molecule id="F4IRW0-1"/>
    <property type="nucleotide sequence ID" value="NM_179954.3"/>
</dbReference>
<dbReference type="RefSeq" id="NP_850286.1">
    <molecule id="F4IRW0-2"/>
    <property type="nucleotide sequence ID" value="NM_179955.2"/>
</dbReference>
<dbReference type="SMR" id="F4IRW0"/>
<dbReference type="FunCoup" id="F4IRW0">
    <property type="interactions" value="904"/>
</dbReference>
<dbReference type="STRING" id="3702.F4IRW0"/>
<dbReference type="TCDB" id="9.A.15.3.1">
    <property type="family name" value="the autophagy-related phagophore-formation transporter (apt) family"/>
</dbReference>
<dbReference type="iPTMnet" id="F4IRW0"/>
<dbReference type="PaxDb" id="3702-AT2G37840.1"/>
<dbReference type="ProteomicsDB" id="246733">
    <molecule id="F4IRW0-1"/>
</dbReference>
<dbReference type="EnsemblPlants" id="AT2G37840.1">
    <molecule id="F4IRW0-1"/>
    <property type="protein sequence ID" value="AT2G37840.1"/>
    <property type="gene ID" value="AT2G37840"/>
</dbReference>
<dbReference type="EnsemblPlants" id="AT2G37840.2">
    <molecule id="F4IRW0-2"/>
    <property type="protein sequence ID" value="AT2G37840.2"/>
    <property type="gene ID" value="AT2G37840"/>
</dbReference>
<dbReference type="GeneID" id="818361"/>
<dbReference type="Gramene" id="AT2G37840.1">
    <molecule id="F4IRW0-1"/>
    <property type="protein sequence ID" value="AT2G37840.1"/>
    <property type="gene ID" value="AT2G37840"/>
</dbReference>
<dbReference type="Gramene" id="AT2G37840.2">
    <molecule id="F4IRW0-2"/>
    <property type="protein sequence ID" value="AT2G37840.2"/>
    <property type="gene ID" value="AT2G37840"/>
</dbReference>
<dbReference type="KEGG" id="ath:AT2G37840"/>
<dbReference type="Araport" id="AT2G37840"/>
<dbReference type="TAIR" id="AT2G37840">
    <property type="gene designation" value="ATG1C"/>
</dbReference>
<dbReference type="eggNOG" id="KOG0595">
    <property type="taxonomic scope" value="Eukaryota"/>
</dbReference>
<dbReference type="HOGENOM" id="CLU_031241_0_0_1"/>
<dbReference type="InParanoid" id="F4IRW0"/>
<dbReference type="OMA" id="SPCKLES"/>
<dbReference type="OrthoDB" id="346907at2759"/>
<dbReference type="PRO" id="PR:F4IRW0"/>
<dbReference type="Proteomes" id="UP000006548">
    <property type="component" value="Chromosome 2"/>
</dbReference>
<dbReference type="ExpressionAtlas" id="F4IRW0">
    <property type="expression patterns" value="baseline and differential"/>
</dbReference>
<dbReference type="GO" id="GO:0005776">
    <property type="term" value="C:autophagosome"/>
    <property type="evidence" value="ECO:0007669"/>
    <property type="project" value="UniProtKB-SubCell"/>
</dbReference>
<dbReference type="GO" id="GO:0031410">
    <property type="term" value="C:cytoplasmic vesicle"/>
    <property type="evidence" value="ECO:0007669"/>
    <property type="project" value="UniProtKB-KW"/>
</dbReference>
<dbReference type="GO" id="GO:0005524">
    <property type="term" value="F:ATP binding"/>
    <property type="evidence" value="ECO:0007669"/>
    <property type="project" value="UniProtKB-KW"/>
</dbReference>
<dbReference type="GO" id="GO:0004674">
    <property type="term" value="F:protein serine/threonine kinase activity"/>
    <property type="evidence" value="ECO:0007669"/>
    <property type="project" value="UniProtKB-KW"/>
</dbReference>
<dbReference type="GO" id="GO:0006914">
    <property type="term" value="P:autophagy"/>
    <property type="evidence" value="ECO:0007669"/>
    <property type="project" value="UniProtKB-KW"/>
</dbReference>
<dbReference type="GO" id="GO:0015031">
    <property type="term" value="P:protein transport"/>
    <property type="evidence" value="ECO:0007669"/>
    <property type="project" value="UniProtKB-KW"/>
</dbReference>
<dbReference type="GO" id="GO:0010506">
    <property type="term" value="P:regulation of autophagy"/>
    <property type="evidence" value="ECO:0007669"/>
    <property type="project" value="InterPro"/>
</dbReference>
<dbReference type="CDD" id="cd14009">
    <property type="entry name" value="STKc_ATG1_ULK_like"/>
    <property type="match status" value="1"/>
</dbReference>
<dbReference type="FunFam" id="3.30.200.20:FF:000042">
    <property type="entry name" value="Aurora kinase A"/>
    <property type="match status" value="1"/>
</dbReference>
<dbReference type="FunFam" id="1.10.510.10:FF:000548">
    <property type="entry name" value="Serine/threonine-protein kinase ATG1"/>
    <property type="match status" value="1"/>
</dbReference>
<dbReference type="Gene3D" id="1.10.510.10">
    <property type="entry name" value="Transferase(Phosphotransferase) domain 1"/>
    <property type="match status" value="1"/>
</dbReference>
<dbReference type="InterPro" id="IPR045269">
    <property type="entry name" value="Atg1-like"/>
</dbReference>
<dbReference type="InterPro" id="IPR011009">
    <property type="entry name" value="Kinase-like_dom_sf"/>
</dbReference>
<dbReference type="InterPro" id="IPR056281">
    <property type="entry name" value="MIT_ATG1a/b/c"/>
</dbReference>
<dbReference type="InterPro" id="IPR000719">
    <property type="entry name" value="Prot_kinase_dom"/>
</dbReference>
<dbReference type="InterPro" id="IPR017441">
    <property type="entry name" value="Protein_kinase_ATP_BS"/>
</dbReference>
<dbReference type="InterPro" id="IPR008271">
    <property type="entry name" value="Ser/Thr_kinase_AS"/>
</dbReference>
<dbReference type="PANTHER" id="PTHR24348">
    <property type="entry name" value="SERINE/THREONINE-PROTEIN KINASE UNC-51-RELATED"/>
    <property type="match status" value="1"/>
</dbReference>
<dbReference type="PANTHER" id="PTHR24348:SF68">
    <property type="entry name" value="SERINE_THREONINE-PROTEIN KINASE ATG1C"/>
    <property type="match status" value="1"/>
</dbReference>
<dbReference type="Pfam" id="PF24497">
    <property type="entry name" value="MIT_ATG1"/>
    <property type="match status" value="1"/>
</dbReference>
<dbReference type="Pfam" id="PF00069">
    <property type="entry name" value="Pkinase"/>
    <property type="match status" value="1"/>
</dbReference>
<dbReference type="SMART" id="SM00220">
    <property type="entry name" value="S_TKc"/>
    <property type="match status" value="1"/>
</dbReference>
<dbReference type="SUPFAM" id="SSF56112">
    <property type="entry name" value="Protein kinase-like (PK-like)"/>
    <property type="match status" value="1"/>
</dbReference>
<dbReference type="PROSITE" id="PS00107">
    <property type="entry name" value="PROTEIN_KINASE_ATP"/>
    <property type="match status" value="1"/>
</dbReference>
<dbReference type="PROSITE" id="PS50011">
    <property type="entry name" value="PROTEIN_KINASE_DOM"/>
    <property type="match status" value="1"/>
</dbReference>
<dbReference type="PROSITE" id="PS00108">
    <property type="entry name" value="PROTEIN_KINASE_ST"/>
    <property type="match status" value="1"/>
</dbReference>
<gene>
    <name evidence="5" type="primary">ATG1C</name>
    <name evidence="7" type="ordered locus">At2g37840</name>
</gene>